<dbReference type="EMBL" id="AE017196">
    <property type="protein sequence ID" value="AAS14921.1"/>
    <property type="molecule type" value="Genomic_DNA"/>
</dbReference>
<dbReference type="SMR" id="P61189"/>
<dbReference type="EnsemblBacteria" id="AAS14921">
    <property type="protein sequence ID" value="AAS14921"/>
    <property type="gene ID" value="WD_1277"/>
</dbReference>
<dbReference type="KEGG" id="wol:WD_1277"/>
<dbReference type="eggNOG" id="COG0326">
    <property type="taxonomic scope" value="Bacteria"/>
</dbReference>
<dbReference type="Proteomes" id="UP000008215">
    <property type="component" value="Chromosome"/>
</dbReference>
<dbReference type="GO" id="GO:0005737">
    <property type="term" value="C:cytoplasm"/>
    <property type="evidence" value="ECO:0007669"/>
    <property type="project" value="UniProtKB-SubCell"/>
</dbReference>
<dbReference type="GO" id="GO:0005524">
    <property type="term" value="F:ATP binding"/>
    <property type="evidence" value="ECO:0007669"/>
    <property type="project" value="UniProtKB-UniRule"/>
</dbReference>
<dbReference type="GO" id="GO:0016887">
    <property type="term" value="F:ATP hydrolysis activity"/>
    <property type="evidence" value="ECO:0007669"/>
    <property type="project" value="InterPro"/>
</dbReference>
<dbReference type="GO" id="GO:0140662">
    <property type="term" value="F:ATP-dependent protein folding chaperone"/>
    <property type="evidence" value="ECO:0007669"/>
    <property type="project" value="InterPro"/>
</dbReference>
<dbReference type="GO" id="GO:0051082">
    <property type="term" value="F:unfolded protein binding"/>
    <property type="evidence" value="ECO:0007669"/>
    <property type="project" value="UniProtKB-UniRule"/>
</dbReference>
<dbReference type="CDD" id="cd16927">
    <property type="entry name" value="HATPase_Hsp90-like"/>
    <property type="match status" value="1"/>
</dbReference>
<dbReference type="FunFam" id="3.30.565.10:FF:000009">
    <property type="entry name" value="Molecular chaperone HtpG"/>
    <property type="match status" value="1"/>
</dbReference>
<dbReference type="Gene3D" id="3.30.230.80">
    <property type="match status" value="1"/>
</dbReference>
<dbReference type="Gene3D" id="3.40.50.11260">
    <property type="match status" value="1"/>
</dbReference>
<dbReference type="Gene3D" id="1.20.120.790">
    <property type="entry name" value="Heat shock protein 90, C-terminal domain"/>
    <property type="match status" value="1"/>
</dbReference>
<dbReference type="Gene3D" id="3.30.565.10">
    <property type="entry name" value="Histidine kinase-like ATPase, C-terminal domain"/>
    <property type="match status" value="1"/>
</dbReference>
<dbReference type="HAMAP" id="MF_00505">
    <property type="entry name" value="HSP90"/>
    <property type="match status" value="1"/>
</dbReference>
<dbReference type="InterPro" id="IPR036890">
    <property type="entry name" value="HATPase_C_sf"/>
</dbReference>
<dbReference type="InterPro" id="IPR019805">
    <property type="entry name" value="Heat_shock_protein_90_CS"/>
</dbReference>
<dbReference type="InterPro" id="IPR037196">
    <property type="entry name" value="HSP90_C"/>
</dbReference>
<dbReference type="InterPro" id="IPR001404">
    <property type="entry name" value="Hsp90_fam"/>
</dbReference>
<dbReference type="InterPro" id="IPR020575">
    <property type="entry name" value="Hsp90_N"/>
</dbReference>
<dbReference type="InterPro" id="IPR020568">
    <property type="entry name" value="Ribosomal_Su5_D2-typ_SF"/>
</dbReference>
<dbReference type="NCBIfam" id="NF003555">
    <property type="entry name" value="PRK05218.1"/>
    <property type="match status" value="1"/>
</dbReference>
<dbReference type="PANTHER" id="PTHR11528">
    <property type="entry name" value="HEAT SHOCK PROTEIN 90 FAMILY MEMBER"/>
    <property type="match status" value="1"/>
</dbReference>
<dbReference type="Pfam" id="PF13589">
    <property type="entry name" value="HATPase_c_3"/>
    <property type="match status" value="1"/>
</dbReference>
<dbReference type="Pfam" id="PF00183">
    <property type="entry name" value="HSP90"/>
    <property type="match status" value="1"/>
</dbReference>
<dbReference type="PIRSF" id="PIRSF002583">
    <property type="entry name" value="Hsp90"/>
    <property type="match status" value="1"/>
</dbReference>
<dbReference type="PRINTS" id="PR00775">
    <property type="entry name" value="HEATSHOCK90"/>
</dbReference>
<dbReference type="SUPFAM" id="SSF55874">
    <property type="entry name" value="ATPase domain of HSP90 chaperone/DNA topoisomerase II/histidine kinase"/>
    <property type="match status" value="1"/>
</dbReference>
<dbReference type="SUPFAM" id="SSF110942">
    <property type="entry name" value="HSP90 C-terminal domain"/>
    <property type="match status" value="1"/>
</dbReference>
<dbReference type="SUPFAM" id="SSF54211">
    <property type="entry name" value="Ribosomal protein S5 domain 2-like"/>
    <property type="match status" value="1"/>
</dbReference>
<dbReference type="PROSITE" id="PS00298">
    <property type="entry name" value="HSP90"/>
    <property type="match status" value="1"/>
</dbReference>
<accession>P61189</accession>
<proteinExistence type="inferred from homology"/>
<name>HTPG_WOLPM</name>
<organism>
    <name type="scientific">Wolbachia pipientis wMel</name>
    <dbReference type="NCBI Taxonomy" id="163164"/>
    <lineage>
        <taxon>Bacteria</taxon>
        <taxon>Pseudomonadati</taxon>
        <taxon>Pseudomonadota</taxon>
        <taxon>Alphaproteobacteria</taxon>
        <taxon>Rickettsiales</taxon>
        <taxon>Anaplasmataceae</taxon>
        <taxon>Wolbachieae</taxon>
        <taxon>Wolbachia</taxon>
    </lineage>
</organism>
<comment type="function">
    <text evidence="1">Molecular chaperone. Has ATPase activity.</text>
</comment>
<comment type="subunit">
    <text evidence="1">Homodimer.</text>
</comment>
<comment type="subcellular location">
    <subcellularLocation>
        <location evidence="1">Cytoplasm</location>
    </subcellularLocation>
</comment>
<comment type="similarity">
    <text evidence="1">Belongs to the heat shock protein 90 family.</text>
</comment>
<keyword id="KW-0067">ATP-binding</keyword>
<keyword id="KW-0143">Chaperone</keyword>
<keyword id="KW-0963">Cytoplasm</keyword>
<keyword id="KW-0547">Nucleotide-binding</keyword>
<keyword id="KW-0346">Stress response</keyword>
<protein>
    <recommendedName>
        <fullName evidence="1">Chaperone protein HtpG</fullName>
    </recommendedName>
    <alternativeName>
        <fullName evidence="1">Heat shock protein HtpG</fullName>
    </alternativeName>
    <alternativeName>
        <fullName evidence="1">High temperature protein G</fullName>
    </alternativeName>
</protein>
<gene>
    <name evidence="1" type="primary">htpG</name>
    <name type="ordered locus">WD_1277</name>
</gene>
<sequence>MELKMHNVQETENLKFDAEVGKVLNIVIHSLYTNKDIFLRELISNASDACDKLRYESQLNPNLLDLSDELKITISSNKDKNELYITDNGIGMNRQDLIDNLGTIASSGTQKFLDAIKNSKDSSQTVELIGKFGVGFYSSFMVASEVIVESRKAGEEESWIWQSKGDGEYSISKSDNQVPRGTKITLIMHPEENEFLDKFRVENIVTTYSDHINFPVEFIDEEGKSEKLNSKAAIWTKPKNDVTQEEHNDFFRSVAHVGGEPWMILHNKNEGAIEYTNLLYVPSIKPFDLFHPDRRCSVKLYVNKVFITEDNVQIIPQYLRFLKGIVDSPDLPLNISRETLQNNRVVEQIRKSLTKRAISELGKKAKENLEEYTKFWTNFGAVLKEGLCEAMPTDEREALLSICRFHSTGDEKLVSIDDYISRMKPEQEHIYYLTGNSLDSVKNSPQLEGFVSKGLEVLLFVDPVDDFWTSVIHEYKDQKIKSVTRADVDLEKFSSEEDKTDEENKSNEEKTEETILQYFTTVLGDSVKSVKISKKLTDSPVCLAVDEGAMDLRMERFLREQKQLNYRTPKVLEINTKHPLIKSIMKSYAESGENPTLEDMIHLLFYQACIVEGEEMDDVSLFAKRLNNLLGKISV</sequence>
<feature type="chain" id="PRO_0000063025" description="Chaperone protein HtpG">
    <location>
        <begin position="1"/>
        <end position="635"/>
    </location>
</feature>
<feature type="region of interest" description="A; substrate-binding" evidence="1">
    <location>
        <begin position="1"/>
        <end position="337"/>
    </location>
</feature>
<feature type="region of interest" description="B" evidence="1">
    <location>
        <begin position="338"/>
        <end position="556"/>
    </location>
</feature>
<feature type="region of interest" description="C" evidence="1">
    <location>
        <begin position="557"/>
        <end position="635"/>
    </location>
</feature>
<evidence type="ECO:0000255" key="1">
    <source>
        <dbReference type="HAMAP-Rule" id="MF_00505"/>
    </source>
</evidence>
<reference key="1">
    <citation type="journal article" date="2004" name="PLoS Biol.">
        <title>Phylogenomics of the reproductive parasite Wolbachia pipientis wMel: a streamlined genome overrun by mobile genetic elements.</title>
        <authorList>
            <person name="Wu M."/>
            <person name="Sun L.V."/>
            <person name="Vamathevan J.J."/>
            <person name="Riegler M."/>
            <person name="DeBoy R.T."/>
            <person name="Brownlie J.C."/>
            <person name="McGraw E.A."/>
            <person name="Martin W."/>
            <person name="Esser C."/>
            <person name="Ahmadinejad N."/>
            <person name="Wiegand C."/>
            <person name="Madupu R."/>
            <person name="Beanan M.J."/>
            <person name="Brinkac L.M."/>
            <person name="Daugherty S.C."/>
            <person name="Durkin A.S."/>
            <person name="Kolonay J.F."/>
            <person name="Nelson W.C."/>
            <person name="Mohamoud Y."/>
            <person name="Lee P."/>
            <person name="Berry K.J."/>
            <person name="Young M.B."/>
            <person name="Utterback T.R."/>
            <person name="Weidman J.F."/>
            <person name="Nierman W.C."/>
            <person name="Paulsen I.T."/>
            <person name="Nelson K.E."/>
            <person name="Tettelin H."/>
            <person name="O'Neill S.L."/>
            <person name="Eisen J.A."/>
        </authorList>
    </citation>
    <scope>NUCLEOTIDE SEQUENCE [LARGE SCALE GENOMIC DNA]</scope>
</reference>